<comment type="function">
    <text evidence="1">One of the components of the core complex of photosystem II (PSII). PSII is a light-driven water:plastoquinone oxidoreductase that uses light energy to abstract electrons from H(2)O, generating O(2) and a proton gradient subsequently used for ATP formation. It consists of a core antenna complex that captures photons, and an electron transfer chain that converts photonic excitation into a charge separation.</text>
</comment>
<comment type="subunit">
    <text evidence="1">PSII is composed of 1 copy each of membrane proteins PsbA, PsbB, PsbC, PsbD, PsbE, PsbF, PsbH, PsbI, PsbJ, PsbK, PsbL, PsbM, PsbT, PsbX, PsbY, PsbZ, Psb30/Ycf12, at least 3 peripheral proteins of the oxygen-evolving complex and a large number of cofactors. It forms dimeric complexes.</text>
</comment>
<comment type="subcellular location">
    <subcellularLocation>
        <location evidence="1">Plastid</location>
        <location evidence="1">Chloroplast thylakoid membrane</location>
        <topology evidence="1">Single-pass membrane protein</topology>
    </subcellularLocation>
</comment>
<comment type="similarity">
    <text evidence="1">Belongs to the PsbK family.</text>
</comment>
<accession>Q5SCX1</accession>
<keyword id="KW-0150">Chloroplast</keyword>
<keyword id="KW-0472">Membrane</keyword>
<keyword id="KW-0602">Photosynthesis</keyword>
<keyword id="KW-0604">Photosystem II</keyword>
<keyword id="KW-0934">Plastid</keyword>
<keyword id="KW-0674">Reaction center</keyword>
<keyword id="KW-0793">Thylakoid</keyword>
<keyword id="KW-0812">Transmembrane</keyword>
<keyword id="KW-1133">Transmembrane helix</keyword>
<sequence>MLKFYLENVFHLIFFAKLPEAYAVSDPIVNVMPIIPLFFFLLAFVWQASVSFR</sequence>
<organism>
    <name type="scientific">Huperzia lucidula</name>
    <name type="common">Shining clubmoss</name>
    <name type="synonym">Lycopodium lucidulum</name>
    <dbReference type="NCBI Taxonomy" id="37429"/>
    <lineage>
        <taxon>Eukaryota</taxon>
        <taxon>Viridiplantae</taxon>
        <taxon>Streptophyta</taxon>
        <taxon>Embryophyta</taxon>
        <taxon>Tracheophyta</taxon>
        <taxon>Lycopodiopsida</taxon>
        <taxon>Lycopodiales</taxon>
        <taxon>Lycopodiaceae</taxon>
        <taxon>Huperzioideae</taxon>
        <taxon>Huperzia</taxon>
    </lineage>
</organism>
<feature type="propeptide" id="PRO_0000029477" evidence="1">
    <location>
        <begin position="1"/>
        <end position="16"/>
    </location>
</feature>
<feature type="chain" id="PRO_0000029478" description="Photosystem II reaction center protein K" evidence="1">
    <location>
        <begin position="17"/>
        <end position="53"/>
    </location>
</feature>
<feature type="transmembrane region" description="Helical" evidence="1">
    <location>
        <begin position="28"/>
        <end position="48"/>
    </location>
</feature>
<proteinExistence type="inferred from homology"/>
<protein>
    <recommendedName>
        <fullName evidence="1">Photosystem II reaction center protein K</fullName>
        <shortName evidence="1">PSII-K</shortName>
    </recommendedName>
</protein>
<gene>
    <name evidence="1" type="primary">psbK</name>
</gene>
<name>PSBK_HUPLU</name>
<geneLocation type="chloroplast"/>
<reference key="1">
    <citation type="journal article" date="2005" name="Gene">
        <title>The first complete chloroplast genome sequence of a lycophyte, Huperzia lucidula (Lycopodiaceae).</title>
        <authorList>
            <person name="Wolf P.G."/>
            <person name="Karol K.G."/>
            <person name="Mandoli D.F."/>
            <person name="Kuehl J.V."/>
            <person name="Arumuganathan K."/>
            <person name="Ellis M.W."/>
            <person name="Mishler B.D."/>
            <person name="Kelch D.G."/>
            <person name="Olmstead R.G."/>
            <person name="Boore J.L."/>
        </authorList>
    </citation>
    <scope>NUCLEOTIDE SEQUENCE [LARGE SCALE GENOMIC DNA]</scope>
</reference>
<evidence type="ECO:0000255" key="1">
    <source>
        <dbReference type="HAMAP-Rule" id="MF_00441"/>
    </source>
</evidence>
<dbReference type="EMBL" id="AY660566">
    <property type="protein sequence ID" value="AAT80736.1"/>
    <property type="molecule type" value="Genomic_DNA"/>
</dbReference>
<dbReference type="RefSeq" id="YP_209540.1">
    <property type="nucleotide sequence ID" value="NC_006861.1"/>
</dbReference>
<dbReference type="SMR" id="Q5SCX1"/>
<dbReference type="GeneID" id="3283823"/>
<dbReference type="GO" id="GO:0009535">
    <property type="term" value="C:chloroplast thylakoid membrane"/>
    <property type="evidence" value="ECO:0007669"/>
    <property type="project" value="UniProtKB-SubCell"/>
</dbReference>
<dbReference type="GO" id="GO:0009539">
    <property type="term" value="C:photosystem II reaction center"/>
    <property type="evidence" value="ECO:0007669"/>
    <property type="project" value="InterPro"/>
</dbReference>
<dbReference type="GO" id="GO:0015979">
    <property type="term" value="P:photosynthesis"/>
    <property type="evidence" value="ECO:0007669"/>
    <property type="project" value="UniProtKB-UniRule"/>
</dbReference>
<dbReference type="HAMAP" id="MF_00441">
    <property type="entry name" value="PSII_PsbK"/>
    <property type="match status" value="1"/>
</dbReference>
<dbReference type="InterPro" id="IPR003687">
    <property type="entry name" value="PSII_PsbK"/>
</dbReference>
<dbReference type="InterPro" id="IPR037270">
    <property type="entry name" value="PSII_PsbK_sf"/>
</dbReference>
<dbReference type="NCBIfam" id="NF002715">
    <property type="entry name" value="PRK02553.1"/>
    <property type="match status" value="1"/>
</dbReference>
<dbReference type="PANTHER" id="PTHR35325">
    <property type="match status" value="1"/>
</dbReference>
<dbReference type="PANTHER" id="PTHR35325:SF1">
    <property type="entry name" value="PHOTOSYSTEM II REACTION CENTER PROTEIN K"/>
    <property type="match status" value="1"/>
</dbReference>
<dbReference type="Pfam" id="PF02533">
    <property type="entry name" value="PsbK"/>
    <property type="match status" value="1"/>
</dbReference>
<dbReference type="SUPFAM" id="SSF161037">
    <property type="entry name" value="Photosystem II reaction center protein K, PsbK"/>
    <property type="match status" value="1"/>
</dbReference>